<evidence type="ECO:0000255" key="1">
    <source>
        <dbReference type="HAMAP-Rule" id="MF_01308"/>
    </source>
</evidence>
<evidence type="ECO:0000305" key="2"/>
<sequence length="302" mass="35158">MSNNSSTSFKNQKPVEPIGIIPRSIIRTFNRFIIQLFPNSNALVIQEFRISRYQVFVSIQCLLSLIFIPLIITFLSKTFVFLPLTEYVWNTQTDDIFLNSYLEKEALSELQDFEEQLYFDYFVSPNTYETPNWASYQISTDSSSQLESSFNNFPEILKSEIQKKTLELATHYNQKSIESLTNLFSDFVSFGTFALLVIILKPQIIILKSFLIESIYSLSDTIKSFLLILGTDLLVGFHSPRGWELFLEFVLNRFGFPHDENFIFLFVATLPVLLDTVFKYWIFRYLNKISPSTVATYHAMLE</sequence>
<keyword id="KW-0050">Antiport</keyword>
<keyword id="KW-0150">Chloroplast</keyword>
<keyword id="KW-0375">Hydrogen ion transport</keyword>
<keyword id="KW-0406">Ion transport</keyword>
<keyword id="KW-0472">Membrane</keyword>
<keyword id="KW-0934">Plastid</keyword>
<keyword id="KW-1001">Plastid inner membrane</keyword>
<keyword id="KW-0630">Potassium</keyword>
<keyword id="KW-0633">Potassium transport</keyword>
<keyword id="KW-0812">Transmembrane</keyword>
<keyword id="KW-1133">Transmembrane helix</keyword>
<keyword id="KW-0813">Transport</keyword>
<accession>Q3ZJ15</accession>
<proteinExistence type="inferred from homology"/>
<reference key="1">
    <citation type="journal article" date="2005" name="Mol. Biol. Evol.">
        <title>The chloroplast genome sequence of the green alga Pseudendoclonium akinetum (Ulvophyceae) reveals unusual structural features and new insights into the branching order of chlorophyte lineages.</title>
        <authorList>
            <person name="Pombert J.-F."/>
            <person name="Otis C."/>
            <person name="Lemieux C."/>
            <person name="Turmel M."/>
        </authorList>
    </citation>
    <scope>NUCLEOTIDE SEQUENCE [LARGE SCALE GENOMIC DNA]</scope>
    <source>
        <strain>UTEX 1912</strain>
    </source>
</reference>
<organism>
    <name type="scientific">Tupiella akineta</name>
    <name type="common">Green alga</name>
    <name type="synonym">Pseudendoclonium akinetum</name>
    <dbReference type="NCBI Taxonomy" id="160070"/>
    <lineage>
        <taxon>Eukaryota</taxon>
        <taxon>Viridiplantae</taxon>
        <taxon>Chlorophyta</taxon>
        <taxon>Ulvophyceae</taxon>
        <taxon>OUU clade</taxon>
        <taxon>Ulotrichales</taxon>
        <taxon>Tupiellaceae</taxon>
        <taxon>Tupiella</taxon>
    </lineage>
</organism>
<feature type="chain" id="PRO_0000275250" description="Potassium/proton antiporter CemA">
    <location>
        <begin position="1"/>
        <end position="302"/>
    </location>
</feature>
<feature type="transmembrane region" description="Helical" evidence="1">
    <location>
        <begin position="55"/>
        <end position="75"/>
    </location>
</feature>
<feature type="transmembrane region" description="Helical" evidence="1">
    <location>
        <begin position="187"/>
        <end position="207"/>
    </location>
</feature>
<feature type="transmembrane region" description="Helical" evidence="1">
    <location>
        <begin position="225"/>
        <end position="247"/>
    </location>
</feature>
<feature type="transmembrane region" description="Helical" evidence="1">
    <location>
        <begin position="262"/>
        <end position="282"/>
    </location>
</feature>
<protein>
    <recommendedName>
        <fullName evidence="1">Potassium/proton antiporter CemA</fullName>
    </recommendedName>
    <alternativeName>
        <fullName evidence="1">Chloroplast envelope membrane protein A</fullName>
        <shortName evidence="1">CemA</shortName>
    </alternativeName>
</protein>
<dbReference type="EMBL" id="AY835431">
    <property type="protein sequence ID" value="AAV80674.1"/>
    <property type="molecule type" value="Genomic_DNA"/>
</dbReference>
<dbReference type="RefSeq" id="YP_636252.1">
    <property type="nucleotide sequence ID" value="NC_008114.1"/>
</dbReference>
<dbReference type="SMR" id="Q3ZJ15"/>
<dbReference type="GeneID" id="4108746"/>
<dbReference type="GO" id="GO:0009706">
    <property type="term" value="C:chloroplast inner membrane"/>
    <property type="evidence" value="ECO:0007669"/>
    <property type="project" value="UniProtKB-SubCell"/>
</dbReference>
<dbReference type="GO" id="GO:0015297">
    <property type="term" value="F:antiporter activity"/>
    <property type="evidence" value="ECO:0007669"/>
    <property type="project" value="UniProtKB-KW"/>
</dbReference>
<dbReference type="GO" id="GO:0015078">
    <property type="term" value="F:proton transmembrane transporter activity"/>
    <property type="evidence" value="ECO:0007669"/>
    <property type="project" value="UniProtKB-UniRule"/>
</dbReference>
<dbReference type="GO" id="GO:0006813">
    <property type="term" value="P:potassium ion transport"/>
    <property type="evidence" value="ECO:0007669"/>
    <property type="project" value="UniProtKB-UniRule"/>
</dbReference>
<dbReference type="HAMAP" id="MF_01308">
    <property type="entry name" value="CemA_PxcA"/>
    <property type="match status" value="1"/>
</dbReference>
<dbReference type="InterPro" id="IPR004282">
    <property type="entry name" value="CemA"/>
</dbReference>
<dbReference type="PANTHER" id="PTHR33650:SF2">
    <property type="entry name" value="CHLOROPLAST ENVELOPE MEMBRANE PROTEIN"/>
    <property type="match status" value="1"/>
</dbReference>
<dbReference type="PANTHER" id="PTHR33650">
    <property type="entry name" value="CHLOROPLAST ENVELOPE MEMBRANE PROTEIN-RELATED"/>
    <property type="match status" value="1"/>
</dbReference>
<dbReference type="Pfam" id="PF03040">
    <property type="entry name" value="CemA"/>
    <property type="match status" value="1"/>
</dbReference>
<gene>
    <name evidence="1" type="primary">cemA</name>
</gene>
<name>CEMA_TUPAK</name>
<geneLocation type="chloroplast"/>
<comment type="function">
    <text evidence="1">Contributes to K(+)/H(+) antiport activity by supporting proton efflux to control proton extrusion and homeostasis in chloroplasts in a light-dependent manner to modulate photosynthesis. Prevents excessive induction of non-photochemical quenching (NPQ) under continuous-light conditions. Indirectly promotes efficient inorganic carbon uptake into chloroplasts.</text>
</comment>
<comment type="catalytic activity">
    <reaction evidence="1">
        <text>K(+)(in) + H(+)(out) = K(+)(out) + H(+)(in)</text>
        <dbReference type="Rhea" id="RHEA:29467"/>
        <dbReference type="ChEBI" id="CHEBI:15378"/>
        <dbReference type="ChEBI" id="CHEBI:29103"/>
    </reaction>
</comment>
<comment type="subcellular location">
    <subcellularLocation>
        <location evidence="1">Plastid</location>
        <location evidence="1">Chloroplast inner membrane</location>
        <topology evidence="1">Multi-pass membrane protein</topology>
    </subcellularLocation>
</comment>
<comment type="similarity">
    <text evidence="1 2">Belongs to the CemA family.</text>
</comment>